<reference key="1">
    <citation type="submission" date="2004-06" db="EMBL/GenBank/DDBJ databases">
        <authorList>
            <person name="Birren B.W."/>
            <person name="Stange-Thomann N."/>
            <person name="Hafez N."/>
            <person name="DeCaprio D."/>
            <person name="Fisher S."/>
            <person name="Butler J."/>
            <person name="Elkins T."/>
            <person name="Kodira C.D."/>
            <person name="Major J."/>
            <person name="Wang S."/>
            <person name="Nicol R."/>
            <person name="Nusbaum C."/>
        </authorList>
    </citation>
    <scope>NUCLEOTIDE SEQUENCE [LARGE SCALE GENOMIC DNA]</scope>
    <source>
        <strain>ATCC 33453 / NBRC 100688 / NCTC 11704 / L1</strain>
    </source>
</reference>
<evidence type="ECO:0000255" key="1">
    <source>
        <dbReference type="HAMAP-Rule" id="MF_01382"/>
    </source>
</evidence>
<comment type="function">
    <text evidence="1">Part of the Sec protein translocase complex. Interacts with the SecYEG preprotein conducting channel. Has a central role in coupling the hydrolysis of ATP to the transfer of proteins into and across the cell membrane, serving as an ATP-driven molecular motor driving the stepwise translocation of polypeptide chains across the membrane.</text>
</comment>
<comment type="catalytic activity">
    <reaction evidence="1">
        <text>ATP + H2O + cellular proteinSide 1 = ADP + phosphate + cellular proteinSide 2.</text>
        <dbReference type="EC" id="7.4.2.8"/>
    </reaction>
</comment>
<comment type="subunit">
    <text evidence="1">Monomer and homodimer. Part of the essential Sec protein translocation apparatus which comprises SecA, SecYEG and auxiliary proteins SecDF. Other proteins may also be involved.</text>
</comment>
<comment type="subcellular location">
    <subcellularLocation>
        <location evidence="1">Cell membrane</location>
        <topology evidence="1">Peripheral membrane protein</topology>
        <orientation evidence="1">Cytoplasmic side</orientation>
    </subcellularLocation>
    <subcellularLocation>
        <location evidence="1">Cytoplasm</location>
    </subcellularLocation>
    <text evidence="1">Distribution is 50-50.</text>
</comment>
<comment type="similarity">
    <text evidence="1">Belongs to the SecA family.</text>
</comment>
<sequence>MASDKSLLRMYGKYANEILSLEPEMKKLANEDFAIKTQELRDRIANGEHVDDLVVEAYALAREAANRVLGLNAYKVQLVGAIILHFGDIAEMRTGEGKTLTGLFPAYLNSLTGKGVHIVTVNEYLSRRDSEINGQVFDLLGVSVGLNGTRMPKNLKREAYHADITYTTNAELGFDYLRDNMVVDKEHKVQRELNFAIIDEADSVLIDEARTPLIISGGSSSRINLYKAADEFAQKVNEKEDIDIDLETKQVYLTETGMKKAKDFFSLENLFALENTEIFHLILNALKAHFTFKEGVEYTVASGEVELIDQFTGRILKGRAYSDGLQQAIQAKEKVEIEEETTTLATITYQNFYRLYAKLSGMTGTAKTEEEEFIKIYNTRVVVCPTNRPVIRKDEPDYTFGTKHAALKKLIQDIKTVNEIGNPILIGTTSVESSEQIARYLEKAGLNFEMINAKNHDREADIVSQAGQKYAITLATNMAGRGTDIKLSQEVKDLGGLVVFGVERNEARRIDNQLRGRSGRQGDPGMSRFYISMEDDLMIRFASPRARKSFLSLGDEHIKSKFFTRAVTNAQKKLEGLNFDQRKNVLDYDNILAQQREAMYAQRDSILWADNLKVVIKKFQITVAYEMIEENSEIVHGEKTLNAEKLLKSIDGKLVAHKRFVAKDFYNKEKMNLAVQLAEAMLEFYKARVIDIPDDVVLQMERKNVLTSFDKYWTRHIDIASKLKAGIYLQQYAQNNPLAVYVEQATELFNKTKIYIASEVVDVLSKIIIRDPEQNVESQKIEITDEIIDDILKSTGLTKANINNKDINAKFDELIAKADNQNDIKKLSIQRDIMLGLVIEIQKRRENSGNKTVNLGKEEIDQMLAILGIDNIGSTSKEEIISKYEEKLKLAEDDKTKNLINIAKDVIIALYEQIELIKKDASSLKSVIDDDNDGGEVAKTRIG</sequence>
<keyword id="KW-0067">ATP-binding</keyword>
<keyword id="KW-1003">Cell membrane</keyword>
<keyword id="KW-0963">Cytoplasm</keyword>
<keyword id="KW-0472">Membrane</keyword>
<keyword id="KW-0547">Nucleotide-binding</keyword>
<keyword id="KW-0653">Protein transport</keyword>
<keyword id="KW-1185">Reference proteome</keyword>
<keyword id="KW-1278">Translocase</keyword>
<keyword id="KW-0811">Translocation</keyword>
<keyword id="KW-0813">Transport</keyword>
<organism>
    <name type="scientific">Mesoplasma florum (strain ATCC 33453 / NBRC 100688 / NCTC 11704 / L1)</name>
    <name type="common">Acholeplasma florum</name>
    <dbReference type="NCBI Taxonomy" id="265311"/>
    <lineage>
        <taxon>Bacteria</taxon>
        <taxon>Bacillati</taxon>
        <taxon>Mycoplasmatota</taxon>
        <taxon>Mollicutes</taxon>
        <taxon>Entomoplasmatales</taxon>
        <taxon>Entomoplasmataceae</taxon>
        <taxon>Mesoplasma</taxon>
    </lineage>
</organism>
<name>SECA_MESFL</name>
<proteinExistence type="inferred from homology"/>
<dbReference type="EC" id="7.4.2.8" evidence="1"/>
<dbReference type="EMBL" id="AE017263">
    <property type="protein sequence ID" value="AAT75413.1"/>
    <property type="molecule type" value="Genomic_DNA"/>
</dbReference>
<dbReference type="RefSeq" id="WP_011182954.1">
    <property type="nucleotide sequence ID" value="NC_006055.1"/>
</dbReference>
<dbReference type="RefSeq" id="YP_053297.1">
    <property type="nucleotide sequence ID" value="NC_006055.1"/>
</dbReference>
<dbReference type="SMR" id="Q6F260"/>
<dbReference type="STRING" id="265311.Mfl057"/>
<dbReference type="PaxDb" id="265311-Mfl057"/>
<dbReference type="EnsemblBacteria" id="AAT75413">
    <property type="protein sequence ID" value="AAT75413"/>
    <property type="gene ID" value="Mfl057"/>
</dbReference>
<dbReference type="GeneID" id="2898182"/>
<dbReference type="KEGG" id="mfl:Mfl057"/>
<dbReference type="PATRIC" id="fig|265311.5.peg.57"/>
<dbReference type="eggNOG" id="COG0653">
    <property type="taxonomic scope" value="Bacteria"/>
</dbReference>
<dbReference type="HOGENOM" id="CLU_005314_3_0_14"/>
<dbReference type="OrthoDB" id="9805579at2"/>
<dbReference type="Proteomes" id="UP000006647">
    <property type="component" value="Chromosome"/>
</dbReference>
<dbReference type="GO" id="GO:0031522">
    <property type="term" value="C:cell envelope Sec protein transport complex"/>
    <property type="evidence" value="ECO:0007669"/>
    <property type="project" value="TreeGrafter"/>
</dbReference>
<dbReference type="GO" id="GO:0005829">
    <property type="term" value="C:cytosol"/>
    <property type="evidence" value="ECO:0007669"/>
    <property type="project" value="TreeGrafter"/>
</dbReference>
<dbReference type="GO" id="GO:0005886">
    <property type="term" value="C:plasma membrane"/>
    <property type="evidence" value="ECO:0007669"/>
    <property type="project" value="UniProtKB-SubCell"/>
</dbReference>
<dbReference type="GO" id="GO:0005524">
    <property type="term" value="F:ATP binding"/>
    <property type="evidence" value="ECO:0007669"/>
    <property type="project" value="UniProtKB-UniRule"/>
</dbReference>
<dbReference type="GO" id="GO:0008564">
    <property type="term" value="F:protein-exporting ATPase activity"/>
    <property type="evidence" value="ECO:0007669"/>
    <property type="project" value="UniProtKB-EC"/>
</dbReference>
<dbReference type="GO" id="GO:0065002">
    <property type="term" value="P:intracellular protein transmembrane transport"/>
    <property type="evidence" value="ECO:0007669"/>
    <property type="project" value="UniProtKB-UniRule"/>
</dbReference>
<dbReference type="GO" id="GO:0017038">
    <property type="term" value="P:protein import"/>
    <property type="evidence" value="ECO:0007669"/>
    <property type="project" value="InterPro"/>
</dbReference>
<dbReference type="GO" id="GO:0006605">
    <property type="term" value="P:protein targeting"/>
    <property type="evidence" value="ECO:0007669"/>
    <property type="project" value="UniProtKB-UniRule"/>
</dbReference>
<dbReference type="GO" id="GO:0043952">
    <property type="term" value="P:protein transport by the Sec complex"/>
    <property type="evidence" value="ECO:0007669"/>
    <property type="project" value="TreeGrafter"/>
</dbReference>
<dbReference type="CDD" id="cd17928">
    <property type="entry name" value="DEXDc_SecA"/>
    <property type="match status" value="1"/>
</dbReference>
<dbReference type="CDD" id="cd18803">
    <property type="entry name" value="SF2_C_secA"/>
    <property type="match status" value="1"/>
</dbReference>
<dbReference type="FunFam" id="3.40.50.300:FF:000429">
    <property type="entry name" value="Preprotein translocase subunit SecA"/>
    <property type="match status" value="1"/>
</dbReference>
<dbReference type="Gene3D" id="1.10.3060.10">
    <property type="entry name" value="Helical scaffold and wing domains of SecA"/>
    <property type="match status" value="1"/>
</dbReference>
<dbReference type="Gene3D" id="3.40.50.300">
    <property type="entry name" value="P-loop containing nucleotide triphosphate hydrolases"/>
    <property type="match status" value="3"/>
</dbReference>
<dbReference type="Gene3D" id="3.90.1440.10">
    <property type="entry name" value="SecA, preprotein cross-linking domain"/>
    <property type="match status" value="1"/>
</dbReference>
<dbReference type="HAMAP" id="MF_01382">
    <property type="entry name" value="SecA"/>
    <property type="match status" value="1"/>
</dbReference>
<dbReference type="InterPro" id="IPR014001">
    <property type="entry name" value="Helicase_ATP-bd"/>
</dbReference>
<dbReference type="InterPro" id="IPR001650">
    <property type="entry name" value="Helicase_C-like"/>
</dbReference>
<dbReference type="InterPro" id="IPR027417">
    <property type="entry name" value="P-loop_NTPase"/>
</dbReference>
<dbReference type="InterPro" id="IPR000185">
    <property type="entry name" value="SecA"/>
</dbReference>
<dbReference type="InterPro" id="IPR011115">
    <property type="entry name" value="SecA_DEAD"/>
</dbReference>
<dbReference type="InterPro" id="IPR014018">
    <property type="entry name" value="SecA_motor_DEAD"/>
</dbReference>
<dbReference type="InterPro" id="IPR011130">
    <property type="entry name" value="SecA_preprotein_X-link_dom"/>
</dbReference>
<dbReference type="InterPro" id="IPR044722">
    <property type="entry name" value="SecA_SF2_C"/>
</dbReference>
<dbReference type="InterPro" id="IPR011116">
    <property type="entry name" value="SecA_Wing/Scaffold"/>
</dbReference>
<dbReference type="InterPro" id="IPR036266">
    <property type="entry name" value="SecA_Wing/Scaffold_sf"/>
</dbReference>
<dbReference type="InterPro" id="IPR036670">
    <property type="entry name" value="SecA_X-link_sf"/>
</dbReference>
<dbReference type="NCBIfam" id="NF006630">
    <property type="entry name" value="PRK09200.1"/>
    <property type="match status" value="1"/>
</dbReference>
<dbReference type="NCBIfam" id="TIGR00963">
    <property type="entry name" value="secA"/>
    <property type="match status" value="1"/>
</dbReference>
<dbReference type="PANTHER" id="PTHR30612:SF0">
    <property type="entry name" value="CHLOROPLAST PROTEIN-TRANSPORTING ATPASE"/>
    <property type="match status" value="1"/>
</dbReference>
<dbReference type="PANTHER" id="PTHR30612">
    <property type="entry name" value="SECA INNER MEMBRANE COMPONENT OF SEC PROTEIN SECRETION SYSTEM"/>
    <property type="match status" value="1"/>
</dbReference>
<dbReference type="Pfam" id="PF21090">
    <property type="entry name" value="P-loop_SecA"/>
    <property type="match status" value="1"/>
</dbReference>
<dbReference type="Pfam" id="PF07517">
    <property type="entry name" value="SecA_DEAD"/>
    <property type="match status" value="1"/>
</dbReference>
<dbReference type="Pfam" id="PF01043">
    <property type="entry name" value="SecA_PP_bind"/>
    <property type="match status" value="1"/>
</dbReference>
<dbReference type="Pfam" id="PF07516">
    <property type="entry name" value="SecA_SW"/>
    <property type="match status" value="1"/>
</dbReference>
<dbReference type="PRINTS" id="PR00906">
    <property type="entry name" value="SECA"/>
</dbReference>
<dbReference type="SMART" id="SM00957">
    <property type="entry name" value="SecA_DEAD"/>
    <property type="match status" value="1"/>
</dbReference>
<dbReference type="SMART" id="SM00958">
    <property type="entry name" value="SecA_PP_bind"/>
    <property type="match status" value="1"/>
</dbReference>
<dbReference type="SUPFAM" id="SSF81886">
    <property type="entry name" value="Helical scaffold and wing domains of SecA"/>
    <property type="match status" value="1"/>
</dbReference>
<dbReference type="SUPFAM" id="SSF52540">
    <property type="entry name" value="P-loop containing nucleoside triphosphate hydrolases"/>
    <property type="match status" value="2"/>
</dbReference>
<dbReference type="SUPFAM" id="SSF81767">
    <property type="entry name" value="Pre-protein crosslinking domain of SecA"/>
    <property type="match status" value="1"/>
</dbReference>
<dbReference type="PROSITE" id="PS51196">
    <property type="entry name" value="SECA_MOTOR_DEAD"/>
    <property type="match status" value="1"/>
</dbReference>
<gene>
    <name evidence="1" type="primary">secA</name>
    <name type="ordered locus">Mfl057</name>
</gene>
<feature type="chain" id="PRO_0000320848" description="Protein translocase subunit SecA">
    <location>
        <begin position="1"/>
        <end position="943"/>
    </location>
</feature>
<feature type="binding site" evidence="1">
    <location>
        <position position="77"/>
    </location>
    <ligand>
        <name>ATP</name>
        <dbReference type="ChEBI" id="CHEBI:30616"/>
    </ligand>
</feature>
<feature type="binding site" evidence="1">
    <location>
        <begin position="95"/>
        <end position="99"/>
    </location>
    <ligand>
        <name>ATP</name>
        <dbReference type="ChEBI" id="CHEBI:30616"/>
    </ligand>
</feature>
<feature type="binding site" evidence="1">
    <location>
        <position position="484"/>
    </location>
    <ligand>
        <name>ATP</name>
        <dbReference type="ChEBI" id="CHEBI:30616"/>
    </ligand>
</feature>
<accession>Q6F260</accession>
<protein>
    <recommendedName>
        <fullName evidence="1">Protein translocase subunit SecA</fullName>
        <ecNumber evidence="1">7.4.2.8</ecNumber>
    </recommendedName>
</protein>